<proteinExistence type="evidence at protein level"/>
<name>KSBGL_SPHMU</name>
<accession>Q9ZG90</accession>
<organism>
    <name type="scientific">Sphingobacterium multivorum</name>
    <dbReference type="NCBI Taxonomy" id="28454"/>
    <lineage>
        <taxon>Bacteria</taxon>
        <taxon>Pseudomonadati</taxon>
        <taxon>Bacteroidota</taxon>
        <taxon>Sphingobacteriia</taxon>
        <taxon>Sphingobacteriales</taxon>
        <taxon>Sphingobacteriaceae</taxon>
        <taxon>Sphingobacterium</taxon>
    </lineage>
</organism>
<protein>
    <recommendedName>
        <fullName evidence="7">Keratan-sulfate endo-1,4-beta-galactosidase</fullName>
        <ecNumber evidence="4 5">3.2.1.103</ecNumber>
    </recommendedName>
    <alternativeName>
        <fullName evidence="6">Endo-beta-galactosidase</fullName>
    </alternativeName>
</protein>
<feature type="signal peptide" evidence="5">
    <location>
        <begin position="1"/>
        <end position="46"/>
    </location>
</feature>
<feature type="chain" id="PRO_0000430729" description="Keratan-sulfate endo-1,4-beta-galactosidase">
    <location>
        <begin position="47"/>
        <end position="422"/>
    </location>
</feature>
<feature type="domain" description="GH16" evidence="2">
    <location>
        <begin position="47"/>
        <end position="292"/>
    </location>
</feature>
<feature type="domain" description="CBM-cenC" evidence="1">
    <location>
        <begin position="291"/>
        <end position="406"/>
    </location>
</feature>
<feature type="active site" description="Nucleophile" evidence="3">
    <location>
        <position position="171"/>
    </location>
</feature>
<feature type="active site" description="Proton donor" evidence="3">
    <location>
        <position position="176"/>
    </location>
</feature>
<keyword id="KW-0903">Direct protein sequencing</keyword>
<keyword id="KW-0326">Glycosidase</keyword>
<keyword id="KW-0378">Hydrolase</keyword>
<keyword id="KW-0964">Secreted</keyword>
<keyword id="KW-0732">Signal</keyword>
<dbReference type="EC" id="3.2.1.103" evidence="4 5"/>
<dbReference type="EMBL" id="AF083896">
    <property type="protein sequence ID" value="AAD04036.1"/>
    <property type="molecule type" value="Genomic_DNA"/>
</dbReference>
<dbReference type="SMR" id="Q9ZG90"/>
<dbReference type="CAZy" id="CBM16">
    <property type="family name" value="Carbohydrate-Binding Module Family 16"/>
</dbReference>
<dbReference type="CAZy" id="GH16">
    <property type="family name" value="Glycoside Hydrolase Family 16"/>
</dbReference>
<dbReference type="GO" id="GO:0005576">
    <property type="term" value="C:extracellular region"/>
    <property type="evidence" value="ECO:0007669"/>
    <property type="project" value="UniProtKB-SubCell"/>
</dbReference>
<dbReference type="GO" id="GO:0033930">
    <property type="term" value="F:keratan-sulfate endo-1,4-beta-galactosidase activity"/>
    <property type="evidence" value="ECO:0007669"/>
    <property type="project" value="UniProtKB-EC"/>
</dbReference>
<dbReference type="GO" id="GO:0005975">
    <property type="term" value="P:carbohydrate metabolic process"/>
    <property type="evidence" value="ECO:0007669"/>
    <property type="project" value="InterPro"/>
</dbReference>
<dbReference type="CDD" id="cd08023">
    <property type="entry name" value="GH16_laminarinase_like"/>
    <property type="match status" value="1"/>
</dbReference>
<dbReference type="Gene3D" id="2.60.120.200">
    <property type="match status" value="1"/>
</dbReference>
<dbReference type="Gene3D" id="2.60.120.260">
    <property type="entry name" value="Galactose-binding domain-like"/>
    <property type="match status" value="1"/>
</dbReference>
<dbReference type="InterPro" id="IPR003305">
    <property type="entry name" value="CenC_carb-bd"/>
</dbReference>
<dbReference type="InterPro" id="IPR013320">
    <property type="entry name" value="ConA-like_dom_sf"/>
</dbReference>
<dbReference type="InterPro" id="IPR008979">
    <property type="entry name" value="Galactose-bd-like_sf"/>
</dbReference>
<dbReference type="InterPro" id="IPR000757">
    <property type="entry name" value="GH16"/>
</dbReference>
<dbReference type="InterPro" id="IPR050546">
    <property type="entry name" value="Glycosyl_Hydrlase_16"/>
</dbReference>
<dbReference type="PANTHER" id="PTHR10963:SF55">
    <property type="entry name" value="GLYCOSIDE HYDROLASE FAMILY 16 PROTEIN"/>
    <property type="match status" value="1"/>
</dbReference>
<dbReference type="PANTHER" id="PTHR10963">
    <property type="entry name" value="GLYCOSYL HYDROLASE-RELATED"/>
    <property type="match status" value="1"/>
</dbReference>
<dbReference type="Pfam" id="PF02018">
    <property type="entry name" value="CBM_4_9"/>
    <property type="match status" value="1"/>
</dbReference>
<dbReference type="Pfam" id="PF00722">
    <property type="entry name" value="Glyco_hydro_16"/>
    <property type="match status" value="1"/>
</dbReference>
<dbReference type="SUPFAM" id="SSF49899">
    <property type="entry name" value="Concanavalin A-like lectins/glucanases"/>
    <property type="match status" value="1"/>
</dbReference>
<dbReference type="SUPFAM" id="SSF49785">
    <property type="entry name" value="Galactose-binding domain-like"/>
    <property type="match status" value="1"/>
</dbReference>
<dbReference type="PROSITE" id="PS51762">
    <property type="entry name" value="GH16_2"/>
    <property type="match status" value="1"/>
</dbReference>
<evidence type="ECO:0000255" key="1"/>
<evidence type="ECO:0000255" key="2">
    <source>
        <dbReference type="PROSITE-ProRule" id="PRU01098"/>
    </source>
</evidence>
<evidence type="ECO:0000255" key="3">
    <source>
        <dbReference type="PROSITE-ProRule" id="PRU10064"/>
    </source>
</evidence>
<evidence type="ECO:0000269" key="4">
    <source>
    </source>
</evidence>
<evidence type="ECO:0000269" key="5">
    <source>
    </source>
</evidence>
<evidence type="ECO:0000303" key="6">
    <source>
    </source>
</evidence>
<evidence type="ECO:0000303" key="7">
    <source>
    </source>
</evidence>
<evidence type="ECO:0000305" key="8"/>
<comment type="function">
    <text evidence="4 5">Hydrolyzes internal endo-beta-galactosyl linkages in keratan sulfate and in various neolacto-type glycosphingolipids, producing sulfated and non-sulfated disaccharides, and glucosylceramides respectivly.</text>
</comment>
<comment type="catalytic activity">
    <reaction evidence="4 5">
        <text>Endohydrolysis of (1-&gt;4)-beta-D-galactosidic linkages in keratan sulfate.</text>
        <dbReference type="EC" id="3.2.1.103"/>
    </reaction>
</comment>
<comment type="subcellular location">
    <subcellularLocation>
        <location evidence="5">Secreted</location>
    </subcellularLocation>
</comment>
<comment type="similarity">
    <text evidence="8">Belongs to the glycosyl hydrolase 16 family.</text>
</comment>
<reference key="1">
    <citation type="journal article" date="1998" name="Gene">
        <title>Cloning, functional expression and purification of endo-beta-galactosidase from Flavobacterium keratolyticus.</title>
        <authorList>
            <person name="Leng L."/>
            <person name="Zhu A."/>
            <person name="Zhang Z."/>
            <person name="Hurst R."/>
            <person name="Goldstein J."/>
        </authorList>
    </citation>
    <scope>NUCLEOTIDE SEQUENCE [GENOMIC DNA]</scope>
    <scope>PROTEIN SEQUENCE OF 47-65; 108-126; 128-131; 133-152; 157-164; 176-183 AND 185-203</scope>
    <scope>FUNCTION</scope>
    <scope>CATALYTIC ACTIVITY</scope>
    <scope>SUBCELLULAR LOCATION</scope>
</reference>
<reference key="2">
    <citation type="journal article" date="1986" name="J. Biochem.">
        <title>Substrate specificity of endo-beta-galactosidases from Flavobacterium keratolyticus and Escherichia freundii is different from that of Pseudomonas sp.</title>
        <authorList>
            <person name="Ito M."/>
            <person name="Hirabayashi Y."/>
            <person name="Yamagata T."/>
        </authorList>
    </citation>
    <scope>FUNCTION</scope>
    <scope>CATALYTIC ACTIVITY</scope>
</reference>
<reference key="3">
    <citation type="journal article" date="2014" name="PLoS ONE">
        <title>Finding sequences for over 270 orphan enzymes.</title>
        <authorList>
            <person name="Shearer A.G."/>
            <person name="Altman T."/>
            <person name="Rhee C.D."/>
        </authorList>
    </citation>
    <scope>IDENTIFICATION</scope>
</reference>
<sequence length="422" mass="45783">MRKTKFWLVLSLIATSLSIFACKKDSTATKNPIPEVSKAKASTKLLNATTVATTDYELIWSDEFNSSGGFDSTKWSYADRGTVAWNKYMTSLPAYASQDGSNLVLRMDNAVVAGDPVAYHAGGVKSMGKFSMTYGKVEVRAKFTQGRGSWPAIWMMPEPATAYGGWPSCGEIDSMEHVNNESVMYHTIHNGSVTNANGGSTASKSATYNTTDYNLYTMIWSPNDIRFYVNNSLQYTYARVSGGGTQQWPFDVPFYLILNQAGGAGWPGAITNADLPFSMQVDYVRVYKLPLFSNGDFESGVIYPWTTWGGGSSVVSTDARTGTKCIRETGGETSIEQYLTGLTPNTTYRFGGYAKVSAAGQSVSIGVKNYGGTAVDATIGTTSYSNNSVTFTTGANNTTATVYFYKPLSGTVYGDDFYLEKL</sequence>